<sequence length="361" mass="40468">MALTRLLIKDFRNIESADLALAAGFNFLVGPNGSGKTSVLEAVYTLGHGRAFRSLQAGRVIRHECAEFVLHGRVDANEREASVGLSKSRQGDTKVRIDGTDGHKVAELAQMLPMQLITPEGFTLLNGGPKFRRAFLDWGCFHNEPGFFTAWSNLKRLLKQRNAALRQVSRYTQIRAWDQEIIPLAERISEWRAAYSDAIAADISATCALFLPEFALSFSFQRGWDKESDYGELLARQFERDRALTYTAVGPHKADFRIRADGTPVEDLLSRGQLKLLMCALRLAQGEFLTRQSGRRCLYLLDDFASELDTGRRRLLAERLKATQAQVFVSAVSAEQVADMVGEKGKMFRVEHGKIEVQPQD</sequence>
<comment type="function">
    <text evidence="1">The RecF protein is involved in DNA metabolism; it is required for DNA replication and normal SOS inducibility. RecF binds preferentially to single-stranded, linear DNA. It also seems to bind ATP.</text>
</comment>
<comment type="subcellular location">
    <subcellularLocation>
        <location evidence="1">Cytoplasm</location>
    </subcellularLocation>
</comment>
<comment type="similarity">
    <text evidence="1">Belongs to the RecF family.</text>
</comment>
<reference key="1">
    <citation type="submission" date="2008-02" db="EMBL/GenBank/DDBJ databases">
        <title>Complete sequence of Yersinia pseudotuberculosis YPIII.</title>
        <authorList>
            <consortium name="US DOE Joint Genome Institute"/>
            <person name="Copeland A."/>
            <person name="Lucas S."/>
            <person name="Lapidus A."/>
            <person name="Glavina del Rio T."/>
            <person name="Dalin E."/>
            <person name="Tice H."/>
            <person name="Bruce D."/>
            <person name="Goodwin L."/>
            <person name="Pitluck S."/>
            <person name="Munk A.C."/>
            <person name="Brettin T."/>
            <person name="Detter J.C."/>
            <person name="Han C."/>
            <person name="Tapia R."/>
            <person name="Schmutz J."/>
            <person name="Larimer F."/>
            <person name="Land M."/>
            <person name="Hauser L."/>
            <person name="Challacombe J.F."/>
            <person name="Green L."/>
            <person name="Lindler L.E."/>
            <person name="Nikolich M.P."/>
            <person name="Richardson P."/>
        </authorList>
    </citation>
    <scope>NUCLEOTIDE SEQUENCE [LARGE SCALE GENOMIC DNA]</scope>
    <source>
        <strain>YPIII</strain>
    </source>
</reference>
<feature type="chain" id="PRO_1000121173" description="DNA replication and repair protein RecF">
    <location>
        <begin position="1"/>
        <end position="361"/>
    </location>
</feature>
<feature type="binding site" evidence="1">
    <location>
        <begin position="30"/>
        <end position="37"/>
    </location>
    <ligand>
        <name>ATP</name>
        <dbReference type="ChEBI" id="CHEBI:30616"/>
    </ligand>
</feature>
<accession>B1JGD5</accession>
<organism>
    <name type="scientific">Yersinia pseudotuberculosis serotype O:3 (strain YPIII)</name>
    <dbReference type="NCBI Taxonomy" id="502800"/>
    <lineage>
        <taxon>Bacteria</taxon>
        <taxon>Pseudomonadati</taxon>
        <taxon>Pseudomonadota</taxon>
        <taxon>Gammaproteobacteria</taxon>
        <taxon>Enterobacterales</taxon>
        <taxon>Yersiniaceae</taxon>
        <taxon>Yersinia</taxon>
    </lineage>
</organism>
<proteinExistence type="inferred from homology"/>
<evidence type="ECO:0000255" key="1">
    <source>
        <dbReference type="HAMAP-Rule" id="MF_00365"/>
    </source>
</evidence>
<dbReference type="EMBL" id="CP000950">
    <property type="protein sequence ID" value="ACA66317.1"/>
    <property type="molecule type" value="Genomic_DNA"/>
</dbReference>
<dbReference type="RefSeq" id="WP_002209643.1">
    <property type="nucleotide sequence ID" value="NZ_CP009792.1"/>
</dbReference>
<dbReference type="SMR" id="B1JGD5"/>
<dbReference type="GeneID" id="57974627"/>
<dbReference type="KEGG" id="ypy:YPK_0003"/>
<dbReference type="PATRIC" id="fig|502800.11.peg.605"/>
<dbReference type="GO" id="GO:0005737">
    <property type="term" value="C:cytoplasm"/>
    <property type="evidence" value="ECO:0007669"/>
    <property type="project" value="UniProtKB-SubCell"/>
</dbReference>
<dbReference type="GO" id="GO:0005524">
    <property type="term" value="F:ATP binding"/>
    <property type="evidence" value="ECO:0007669"/>
    <property type="project" value="UniProtKB-UniRule"/>
</dbReference>
<dbReference type="GO" id="GO:0003697">
    <property type="term" value="F:single-stranded DNA binding"/>
    <property type="evidence" value="ECO:0007669"/>
    <property type="project" value="UniProtKB-UniRule"/>
</dbReference>
<dbReference type="GO" id="GO:0006260">
    <property type="term" value="P:DNA replication"/>
    <property type="evidence" value="ECO:0007669"/>
    <property type="project" value="UniProtKB-UniRule"/>
</dbReference>
<dbReference type="GO" id="GO:0000731">
    <property type="term" value="P:DNA synthesis involved in DNA repair"/>
    <property type="evidence" value="ECO:0007669"/>
    <property type="project" value="TreeGrafter"/>
</dbReference>
<dbReference type="GO" id="GO:0006302">
    <property type="term" value="P:double-strand break repair"/>
    <property type="evidence" value="ECO:0007669"/>
    <property type="project" value="TreeGrafter"/>
</dbReference>
<dbReference type="GO" id="GO:0009432">
    <property type="term" value="P:SOS response"/>
    <property type="evidence" value="ECO:0007669"/>
    <property type="project" value="UniProtKB-UniRule"/>
</dbReference>
<dbReference type="FunFam" id="1.20.1050.90:FF:000001">
    <property type="entry name" value="DNA replication and repair protein RecF"/>
    <property type="match status" value="1"/>
</dbReference>
<dbReference type="Gene3D" id="3.40.50.300">
    <property type="entry name" value="P-loop containing nucleotide triphosphate hydrolases"/>
    <property type="match status" value="1"/>
</dbReference>
<dbReference type="Gene3D" id="1.20.1050.90">
    <property type="entry name" value="RecF/RecN/SMC, N-terminal domain"/>
    <property type="match status" value="1"/>
</dbReference>
<dbReference type="HAMAP" id="MF_00365">
    <property type="entry name" value="RecF"/>
    <property type="match status" value="1"/>
</dbReference>
<dbReference type="InterPro" id="IPR001238">
    <property type="entry name" value="DNA-binding_RecF"/>
</dbReference>
<dbReference type="InterPro" id="IPR018078">
    <property type="entry name" value="DNA-binding_RecF_CS"/>
</dbReference>
<dbReference type="InterPro" id="IPR027417">
    <property type="entry name" value="P-loop_NTPase"/>
</dbReference>
<dbReference type="InterPro" id="IPR003395">
    <property type="entry name" value="RecF/RecN/SMC_N"/>
</dbReference>
<dbReference type="InterPro" id="IPR042174">
    <property type="entry name" value="RecF_2"/>
</dbReference>
<dbReference type="NCBIfam" id="TIGR00611">
    <property type="entry name" value="recf"/>
    <property type="match status" value="1"/>
</dbReference>
<dbReference type="PANTHER" id="PTHR32182">
    <property type="entry name" value="DNA REPLICATION AND REPAIR PROTEIN RECF"/>
    <property type="match status" value="1"/>
</dbReference>
<dbReference type="PANTHER" id="PTHR32182:SF0">
    <property type="entry name" value="DNA REPLICATION AND REPAIR PROTEIN RECF"/>
    <property type="match status" value="1"/>
</dbReference>
<dbReference type="Pfam" id="PF02463">
    <property type="entry name" value="SMC_N"/>
    <property type="match status" value="1"/>
</dbReference>
<dbReference type="SUPFAM" id="SSF52540">
    <property type="entry name" value="P-loop containing nucleoside triphosphate hydrolases"/>
    <property type="match status" value="1"/>
</dbReference>
<dbReference type="PROSITE" id="PS00617">
    <property type="entry name" value="RECF_1"/>
    <property type="match status" value="1"/>
</dbReference>
<dbReference type="PROSITE" id="PS00618">
    <property type="entry name" value="RECF_2"/>
    <property type="match status" value="1"/>
</dbReference>
<protein>
    <recommendedName>
        <fullName evidence="1">DNA replication and repair protein RecF</fullName>
    </recommendedName>
</protein>
<keyword id="KW-0067">ATP-binding</keyword>
<keyword id="KW-0963">Cytoplasm</keyword>
<keyword id="KW-0227">DNA damage</keyword>
<keyword id="KW-0234">DNA repair</keyword>
<keyword id="KW-0235">DNA replication</keyword>
<keyword id="KW-0238">DNA-binding</keyword>
<keyword id="KW-0547">Nucleotide-binding</keyword>
<keyword id="KW-0742">SOS response</keyword>
<name>RECF_YERPY</name>
<gene>
    <name evidence="1" type="primary">recF</name>
    <name type="ordered locus">YPK_0003</name>
</gene>